<comment type="function">
    <text>May be involved in transcriptional regulation.</text>
</comment>
<comment type="subcellular location">
    <subcellularLocation>
        <location evidence="3">Nucleus</location>
    </subcellularLocation>
</comment>
<comment type="similarity">
    <text evidence="3">Belongs to the krueppel C2H2-type zinc-finger protein family.</text>
</comment>
<comment type="sequence caution" evidence="3">
    <conflict type="erroneous initiation">
        <sequence resource="EMBL-CDS" id="BAA95997"/>
    </conflict>
</comment>
<proteinExistence type="evidence at transcript level"/>
<keyword id="KW-0238">DNA-binding</keyword>
<keyword id="KW-0479">Metal-binding</keyword>
<keyword id="KW-0539">Nucleus</keyword>
<keyword id="KW-1185">Reference proteome</keyword>
<keyword id="KW-0677">Repeat</keyword>
<keyword id="KW-0804">Transcription</keyword>
<keyword id="KW-0805">Transcription regulation</keyword>
<keyword id="KW-0862">Zinc</keyword>
<keyword id="KW-0863">Zinc-finger</keyword>
<organism>
    <name type="scientific">Homo sapiens</name>
    <name type="common">Human</name>
    <dbReference type="NCBI Taxonomy" id="9606"/>
    <lineage>
        <taxon>Eukaryota</taxon>
        <taxon>Metazoa</taxon>
        <taxon>Chordata</taxon>
        <taxon>Craniata</taxon>
        <taxon>Vertebrata</taxon>
        <taxon>Euteleostomi</taxon>
        <taxon>Mammalia</taxon>
        <taxon>Eutheria</taxon>
        <taxon>Euarchontoglires</taxon>
        <taxon>Primates</taxon>
        <taxon>Haplorrhini</taxon>
        <taxon>Catarrhini</taxon>
        <taxon>Hominidae</taxon>
        <taxon>Homo</taxon>
    </lineage>
</organism>
<accession>Q9P255</accession>
<accession>Q08EI7</accession>
<accession>Q08EI8</accession>
<dbReference type="EMBL" id="AB040906">
    <property type="protein sequence ID" value="BAA95997.1"/>
    <property type="status" value="ALT_INIT"/>
    <property type="molecule type" value="mRNA"/>
</dbReference>
<dbReference type="EMBL" id="BC110575">
    <property type="status" value="NOT_ANNOTATED_CDS"/>
    <property type="molecule type" value="mRNA"/>
</dbReference>
<dbReference type="CCDS" id="CCDS46032.1"/>
<dbReference type="RefSeq" id="NP_065906.1">
    <property type="nucleotide sequence ID" value="NM_020855.3"/>
</dbReference>
<dbReference type="RefSeq" id="XP_047295086.1">
    <property type="nucleotide sequence ID" value="XM_047439130.1"/>
</dbReference>
<dbReference type="RefSeq" id="XP_054177519.1">
    <property type="nucleotide sequence ID" value="XM_054321544.1"/>
</dbReference>
<dbReference type="SMR" id="Q9P255"/>
<dbReference type="BioGRID" id="121662">
    <property type="interactions" value="14"/>
</dbReference>
<dbReference type="FunCoup" id="Q9P255">
    <property type="interactions" value="3"/>
</dbReference>
<dbReference type="IntAct" id="Q9P255">
    <property type="interactions" value="11"/>
</dbReference>
<dbReference type="STRING" id="9606.ENSP00000413660"/>
<dbReference type="iPTMnet" id="Q9P255"/>
<dbReference type="PhosphoSitePlus" id="Q9P255"/>
<dbReference type="BioMuta" id="ZNF492"/>
<dbReference type="DMDM" id="148887468"/>
<dbReference type="jPOST" id="Q9P255"/>
<dbReference type="MassIVE" id="Q9P255"/>
<dbReference type="PaxDb" id="9606-ENSP00000413660"/>
<dbReference type="PeptideAtlas" id="Q9P255"/>
<dbReference type="ProteomicsDB" id="83732"/>
<dbReference type="Antibodypedia" id="55051">
    <property type="antibodies" value="58 antibodies from 12 providers"/>
</dbReference>
<dbReference type="DNASU" id="57615"/>
<dbReference type="Ensembl" id="ENST00000456783.3">
    <property type="protein sequence ID" value="ENSP00000413660.2"/>
    <property type="gene ID" value="ENSG00000229676.3"/>
</dbReference>
<dbReference type="GeneID" id="57615"/>
<dbReference type="KEGG" id="hsa:57615"/>
<dbReference type="MANE-Select" id="ENST00000456783.3">
    <property type="protein sequence ID" value="ENSP00000413660.2"/>
    <property type="RefSeq nucleotide sequence ID" value="NM_020855.3"/>
    <property type="RefSeq protein sequence ID" value="NP_065906.1"/>
</dbReference>
<dbReference type="UCSC" id="uc002nqw.3">
    <property type="organism name" value="human"/>
</dbReference>
<dbReference type="AGR" id="HGNC:23707"/>
<dbReference type="CTD" id="57615"/>
<dbReference type="DisGeNET" id="57615"/>
<dbReference type="GeneCards" id="ZNF492"/>
<dbReference type="HGNC" id="HGNC:23707">
    <property type="gene designation" value="ZNF492"/>
</dbReference>
<dbReference type="HPA" id="ENSG00000229676">
    <property type="expression patterns" value="Tissue enhanced (bone marrow, testis)"/>
</dbReference>
<dbReference type="MIM" id="620124">
    <property type="type" value="gene"/>
</dbReference>
<dbReference type="neXtProt" id="NX_Q9P255"/>
<dbReference type="OpenTargets" id="ENSG00000229676"/>
<dbReference type="PharmGKB" id="PA134940205"/>
<dbReference type="VEuPathDB" id="HostDB:ENSG00000229676"/>
<dbReference type="eggNOG" id="KOG1721">
    <property type="taxonomic scope" value="Eukaryota"/>
</dbReference>
<dbReference type="GeneTree" id="ENSGT00940000153236"/>
<dbReference type="HOGENOM" id="CLU_002678_44_0_1"/>
<dbReference type="InParanoid" id="Q9P255"/>
<dbReference type="OMA" id="HEECYNG"/>
<dbReference type="OrthoDB" id="9535228at2759"/>
<dbReference type="PAN-GO" id="Q9P255">
    <property type="GO annotations" value="3 GO annotations based on evolutionary models"/>
</dbReference>
<dbReference type="PhylomeDB" id="Q9P255"/>
<dbReference type="TreeFam" id="TF342117"/>
<dbReference type="PathwayCommons" id="Q9P255"/>
<dbReference type="Reactome" id="R-HSA-212436">
    <property type="pathway name" value="Generic Transcription Pathway"/>
</dbReference>
<dbReference type="SignaLink" id="Q9P255"/>
<dbReference type="BioGRID-ORCS" id="57615">
    <property type="hits" value="537 hits in 1072 CRISPR screens"/>
</dbReference>
<dbReference type="GenomeRNAi" id="57615"/>
<dbReference type="Pharos" id="Q9P255">
    <property type="development level" value="Tdark"/>
</dbReference>
<dbReference type="PRO" id="PR:Q9P255"/>
<dbReference type="Proteomes" id="UP000005640">
    <property type="component" value="Chromosome 19"/>
</dbReference>
<dbReference type="RNAct" id="Q9P255">
    <property type="molecule type" value="protein"/>
</dbReference>
<dbReference type="Bgee" id="ENSG00000229676">
    <property type="expression patterns" value="Expressed in primordial germ cell in gonad and 44 other cell types or tissues"/>
</dbReference>
<dbReference type="GO" id="GO:0005634">
    <property type="term" value="C:nucleus"/>
    <property type="evidence" value="ECO:0007669"/>
    <property type="project" value="UniProtKB-SubCell"/>
</dbReference>
<dbReference type="GO" id="GO:0000981">
    <property type="term" value="F:DNA-binding transcription factor activity, RNA polymerase II-specific"/>
    <property type="evidence" value="ECO:0000318"/>
    <property type="project" value="GO_Central"/>
</dbReference>
<dbReference type="GO" id="GO:0000978">
    <property type="term" value="F:RNA polymerase II cis-regulatory region sequence-specific DNA binding"/>
    <property type="evidence" value="ECO:0000318"/>
    <property type="project" value="GO_Central"/>
</dbReference>
<dbReference type="GO" id="GO:0008270">
    <property type="term" value="F:zinc ion binding"/>
    <property type="evidence" value="ECO:0007669"/>
    <property type="project" value="UniProtKB-KW"/>
</dbReference>
<dbReference type="GO" id="GO:0006355">
    <property type="term" value="P:regulation of DNA-templated transcription"/>
    <property type="evidence" value="ECO:0000318"/>
    <property type="project" value="GO_Central"/>
</dbReference>
<dbReference type="FunFam" id="3.30.160.60:FF:000374">
    <property type="entry name" value="Zinc finger protein 208"/>
    <property type="match status" value="2"/>
</dbReference>
<dbReference type="FunFam" id="3.30.160.60:FF:000034">
    <property type="entry name" value="zinc finger protein 25"/>
    <property type="match status" value="1"/>
</dbReference>
<dbReference type="FunFam" id="3.30.160.60:FF:001408">
    <property type="entry name" value="Zinc finger protein 260"/>
    <property type="match status" value="1"/>
</dbReference>
<dbReference type="FunFam" id="3.30.160.60:FF:001868">
    <property type="entry name" value="Zinc finger protein 264"/>
    <property type="match status" value="1"/>
</dbReference>
<dbReference type="FunFam" id="3.30.160.60:FF:000120">
    <property type="entry name" value="Zinc finger protein 430"/>
    <property type="match status" value="5"/>
</dbReference>
<dbReference type="FunFam" id="3.30.160.60:FF:002254">
    <property type="entry name" value="Zinc finger protein 540"/>
    <property type="match status" value="1"/>
</dbReference>
<dbReference type="FunFam" id="3.30.160.60:FF:000895">
    <property type="entry name" value="Zinc finger protein 597"/>
    <property type="match status" value="1"/>
</dbReference>
<dbReference type="FunFam" id="3.30.160.60:FF:002483">
    <property type="entry name" value="Zinc finger protein 90"/>
    <property type="match status" value="1"/>
</dbReference>
<dbReference type="Gene3D" id="3.30.160.60">
    <property type="entry name" value="Classic Zinc Finger"/>
    <property type="match status" value="13"/>
</dbReference>
<dbReference type="InterPro" id="IPR001909">
    <property type="entry name" value="KRAB"/>
</dbReference>
<dbReference type="InterPro" id="IPR036051">
    <property type="entry name" value="KRAB_dom_sf"/>
</dbReference>
<dbReference type="InterPro" id="IPR050758">
    <property type="entry name" value="Znf_C2H2-type"/>
</dbReference>
<dbReference type="InterPro" id="IPR036236">
    <property type="entry name" value="Znf_C2H2_sf"/>
</dbReference>
<dbReference type="InterPro" id="IPR013087">
    <property type="entry name" value="Znf_C2H2_type"/>
</dbReference>
<dbReference type="PANTHER" id="PTHR23234:SF8">
    <property type="entry name" value="C2H2-TYPE DOMAIN-CONTAINING PROTEIN"/>
    <property type="match status" value="1"/>
</dbReference>
<dbReference type="PANTHER" id="PTHR23234">
    <property type="entry name" value="ZNF44 PROTEIN"/>
    <property type="match status" value="1"/>
</dbReference>
<dbReference type="Pfam" id="PF00096">
    <property type="entry name" value="zf-C2H2"/>
    <property type="match status" value="13"/>
</dbReference>
<dbReference type="SMART" id="SM00349">
    <property type="entry name" value="KRAB"/>
    <property type="match status" value="1"/>
</dbReference>
<dbReference type="SMART" id="SM00355">
    <property type="entry name" value="ZnF_C2H2"/>
    <property type="match status" value="13"/>
</dbReference>
<dbReference type="SUPFAM" id="SSF57667">
    <property type="entry name" value="beta-beta-alpha zinc fingers"/>
    <property type="match status" value="7"/>
</dbReference>
<dbReference type="SUPFAM" id="SSF109640">
    <property type="entry name" value="KRAB domain (Kruppel-associated box)"/>
    <property type="match status" value="1"/>
</dbReference>
<dbReference type="PROSITE" id="PS50805">
    <property type="entry name" value="KRAB"/>
    <property type="match status" value="1"/>
</dbReference>
<dbReference type="PROSITE" id="PS00028">
    <property type="entry name" value="ZINC_FINGER_C2H2_1"/>
    <property type="match status" value="12"/>
</dbReference>
<dbReference type="PROSITE" id="PS50157">
    <property type="entry name" value="ZINC_FINGER_C2H2_2"/>
    <property type="match status" value="13"/>
</dbReference>
<protein>
    <recommendedName>
        <fullName>Zinc finger protein 492</fullName>
    </recommendedName>
    <alternativeName>
        <fullName>Zinc finger protein 115</fullName>
    </alternativeName>
</protein>
<reference key="1">
    <citation type="journal article" date="2000" name="DNA Res.">
        <title>Prediction of the coding sequences of unidentified human genes. XVII. The complete sequences of 100 new cDNA clones from brain which code for large proteins in vitro.</title>
        <authorList>
            <person name="Nagase T."/>
            <person name="Kikuno R."/>
            <person name="Ishikawa K."/>
            <person name="Hirosawa M."/>
            <person name="Ohara O."/>
        </authorList>
    </citation>
    <scope>NUCLEOTIDE SEQUENCE [LARGE SCALE MRNA]</scope>
    <source>
        <tissue>Brain</tissue>
    </source>
</reference>
<reference key="2">
    <citation type="journal article" date="2004" name="Genome Res.">
        <title>The status, quality, and expansion of the NIH full-length cDNA project: the Mammalian Gene Collection (MGC).</title>
        <authorList>
            <consortium name="The MGC Project Team"/>
        </authorList>
    </citation>
    <scope>NUCLEOTIDE SEQUENCE [LARGE SCALE MRNA]</scope>
</reference>
<gene>
    <name type="primary">ZNF492</name>
    <name type="synonym">KIAA1473</name>
    <name type="synonym">ZNF115</name>
</gene>
<evidence type="ECO:0000255" key="1">
    <source>
        <dbReference type="PROSITE-ProRule" id="PRU00042"/>
    </source>
</evidence>
<evidence type="ECO:0000255" key="2">
    <source>
        <dbReference type="PROSITE-ProRule" id="PRU00119"/>
    </source>
</evidence>
<evidence type="ECO:0000305" key="3"/>
<feature type="chain" id="PRO_0000047615" description="Zinc finger protein 492">
    <location>
        <begin position="1"/>
        <end position="531"/>
    </location>
</feature>
<feature type="domain" description="KRAB" evidence="2">
    <location>
        <begin position="1"/>
        <end position="43"/>
    </location>
</feature>
<feature type="zinc finger region" description="C2H2-type 1" evidence="1">
    <location>
        <begin position="141"/>
        <end position="163"/>
    </location>
</feature>
<feature type="zinc finger region" description="C2H2-type 2" evidence="1">
    <location>
        <begin position="169"/>
        <end position="191"/>
    </location>
</feature>
<feature type="zinc finger region" description="C2H2-type 3" evidence="1">
    <location>
        <begin position="197"/>
        <end position="219"/>
    </location>
</feature>
<feature type="zinc finger region" description="C2H2-type 4" evidence="1">
    <location>
        <begin position="225"/>
        <end position="247"/>
    </location>
</feature>
<feature type="zinc finger region" description="C2H2-type 5" evidence="1">
    <location>
        <begin position="253"/>
        <end position="275"/>
    </location>
</feature>
<feature type="zinc finger region" description="C2H2-type 6" evidence="1">
    <location>
        <begin position="281"/>
        <end position="303"/>
    </location>
</feature>
<feature type="zinc finger region" description="C2H2-type 7" evidence="1">
    <location>
        <begin position="309"/>
        <end position="331"/>
    </location>
</feature>
<feature type="zinc finger region" description="C2H2-type 8" evidence="1">
    <location>
        <begin position="337"/>
        <end position="359"/>
    </location>
</feature>
<feature type="zinc finger region" description="C2H2-type 9" evidence="1">
    <location>
        <begin position="365"/>
        <end position="387"/>
    </location>
</feature>
<feature type="zinc finger region" description="C2H2-type 10" evidence="1">
    <location>
        <begin position="393"/>
        <end position="415"/>
    </location>
</feature>
<feature type="zinc finger region" description="C2H2-type 11" evidence="1">
    <location>
        <begin position="421"/>
        <end position="443"/>
    </location>
</feature>
<feature type="zinc finger region" description="C2H2-type 12; degenerate" evidence="1">
    <location>
        <begin position="449"/>
        <end position="471"/>
    </location>
</feature>
<feature type="zinc finger region" description="C2H2-type 13" evidence="1">
    <location>
        <begin position="477"/>
        <end position="499"/>
    </location>
</feature>
<feature type="sequence variant" id="VAR_052845" description="In dbSNP:rs11672238.">
    <original>T</original>
    <variation>K</variation>
    <location>
        <position position="106"/>
    </location>
</feature>
<name>ZN492_HUMAN</name>
<sequence>MLENYRNLVFVGIAASKPDLITCLEQGKEPWNVKRHEMVAEPPVVCSYFARDLWPKQGKKNYFQKVILRRYKKCGCENLQLRKYCKSMDECKVHKECYNGLNQCLTTTQNKIFQCDKYVKVFHKFSNSNRHTIRHTGKKSFKCKECEKSFCMLSHLAQHKRIHSGEKPYKCKECGKAYNETSNLSTHKRIHTGKKPYKCEECGKAFNRLSHLTTHKIIHTGKKPYKCEECGKAFNQSANLTTHKRIHTGEKPYKCEECGRAFSQSSTLTAHKIIHAGEKPYKCEECGKAFSQSSTLTTHKIIHTGEKFYKCEECGKAFSQLSHLTTHKRIHSGEKPYKCEECGKAFKQSSTLTTHKRIHAGEKFYKCEVCSKAFSRFSHLTTHKRIHTGEKPYKCEECGKAFNLSSQLTTHKIIHTGEKPYKCEECGKAFNQSSTLSKHKVIHTGEKPYKYEECGKAFNQSSHLTTHKMIHTGEKPYKCEECGKAFNNSSILNRHKMIHTGEKLYKPESCNNACDNIAKISKYKRNCAGEK</sequence>